<keyword id="KW-1017">Isopeptide bond</keyword>
<keyword id="KW-0539">Nucleus</keyword>
<keyword id="KW-1185">Reference proteome</keyword>
<keyword id="KW-0687">Ribonucleoprotein</keyword>
<keyword id="KW-0690">Ribosome biogenesis</keyword>
<keyword id="KW-0694">RNA-binding</keyword>
<keyword id="KW-0698">rRNA processing</keyword>
<keyword id="KW-0832">Ubl conjugation</keyword>
<gene>
    <name type="primary">NHP2</name>
    <name type="synonym">NOLA2</name>
</gene>
<name>NHP2_BOVIN</name>
<evidence type="ECO:0000250" key="1"/>
<evidence type="ECO:0000250" key="2">
    <source>
        <dbReference type="UniProtKB" id="Q9NX24"/>
    </source>
</evidence>
<evidence type="ECO:0000305" key="3"/>
<reference key="1">
    <citation type="journal article" date="2005" name="BMC Genomics">
        <title>Characterization of 954 bovine full-CDS cDNA sequences.</title>
        <authorList>
            <person name="Harhay G.P."/>
            <person name="Sonstegard T.S."/>
            <person name="Keele J.W."/>
            <person name="Heaton M.P."/>
            <person name="Clawson M.L."/>
            <person name="Snelling W.M."/>
            <person name="Wiedmann R.T."/>
            <person name="Van Tassell C.P."/>
            <person name="Smith T.P.L."/>
        </authorList>
    </citation>
    <scope>NUCLEOTIDE SEQUENCE [LARGE SCALE MRNA]</scope>
</reference>
<reference key="2">
    <citation type="submission" date="2005-08" db="EMBL/GenBank/DDBJ databases">
        <authorList>
            <consortium name="NIH - Mammalian Gene Collection (MGC) project"/>
        </authorList>
    </citation>
    <scope>NUCLEOTIDE SEQUENCE [LARGE SCALE MRNA]</scope>
    <source>
        <strain>Hereford</strain>
        <tissue>Thymus</tissue>
    </source>
</reference>
<proteinExistence type="evidence at transcript level"/>
<dbReference type="EMBL" id="BT021070">
    <property type="protein sequence ID" value="AAX09087.1"/>
    <property type="molecule type" value="mRNA"/>
</dbReference>
<dbReference type="EMBL" id="BC103161">
    <property type="protein sequence ID" value="AAI03162.1"/>
    <property type="molecule type" value="mRNA"/>
</dbReference>
<dbReference type="RefSeq" id="NP_001015626.1">
    <property type="nucleotide sequence ID" value="NM_001015626.1"/>
</dbReference>
<dbReference type="SMR" id="Q5E950"/>
<dbReference type="FunCoup" id="Q5E950">
    <property type="interactions" value="2384"/>
</dbReference>
<dbReference type="STRING" id="9913.ENSBTAP00000008363"/>
<dbReference type="PaxDb" id="9913-ENSBTAP00000008363"/>
<dbReference type="Ensembl" id="ENSBTAT00000008363.4">
    <property type="protein sequence ID" value="ENSBTAP00000008363.3"/>
    <property type="gene ID" value="ENSBTAG00000006374.5"/>
</dbReference>
<dbReference type="GeneID" id="520891"/>
<dbReference type="KEGG" id="bta:520891"/>
<dbReference type="CTD" id="55651"/>
<dbReference type="VEuPathDB" id="HostDB:ENSBTAG00000006374"/>
<dbReference type="VGNC" id="VGNC:32070">
    <property type="gene designation" value="NHP2"/>
</dbReference>
<dbReference type="eggNOG" id="KOG3167">
    <property type="taxonomic scope" value="Eukaryota"/>
</dbReference>
<dbReference type="GeneTree" id="ENSGT00550000074939"/>
<dbReference type="HOGENOM" id="CLU_084513_1_0_1"/>
<dbReference type="InParanoid" id="Q5E950"/>
<dbReference type="OMA" id="EDNYEAR"/>
<dbReference type="OrthoDB" id="5364946at2759"/>
<dbReference type="TreeFam" id="TF105839"/>
<dbReference type="Reactome" id="R-BTA-171319">
    <property type="pathway name" value="Telomere Extension By Telomerase"/>
</dbReference>
<dbReference type="Proteomes" id="UP000009136">
    <property type="component" value="Chromosome 7"/>
</dbReference>
<dbReference type="Bgee" id="ENSBTAG00000006374">
    <property type="expression patterns" value="Expressed in oocyte and 107 other cell types or tissues"/>
</dbReference>
<dbReference type="GO" id="GO:0031429">
    <property type="term" value="C:box H/ACA snoRNP complex"/>
    <property type="evidence" value="ECO:0000318"/>
    <property type="project" value="GO_Central"/>
</dbReference>
<dbReference type="GO" id="GO:0090661">
    <property type="term" value="C:box H/ACA telomerase RNP complex"/>
    <property type="evidence" value="ECO:0007669"/>
    <property type="project" value="Ensembl"/>
</dbReference>
<dbReference type="GO" id="GO:0015030">
    <property type="term" value="C:Cajal body"/>
    <property type="evidence" value="ECO:0007669"/>
    <property type="project" value="UniProtKB-SubCell"/>
</dbReference>
<dbReference type="GO" id="GO:0005697">
    <property type="term" value="C:telomerase holoenzyme complex"/>
    <property type="evidence" value="ECO:0000250"/>
    <property type="project" value="UniProtKB"/>
</dbReference>
<dbReference type="GO" id="GO:0034513">
    <property type="term" value="F:box H/ACA snoRNA binding"/>
    <property type="evidence" value="ECO:0000318"/>
    <property type="project" value="GO_Central"/>
</dbReference>
<dbReference type="GO" id="GO:0070034">
    <property type="term" value="F:telomerase RNA binding"/>
    <property type="evidence" value="ECO:0007669"/>
    <property type="project" value="Ensembl"/>
</dbReference>
<dbReference type="GO" id="GO:0031118">
    <property type="term" value="P:rRNA pseudouridine synthesis"/>
    <property type="evidence" value="ECO:0000318"/>
    <property type="project" value="GO_Central"/>
</dbReference>
<dbReference type="GO" id="GO:0031120">
    <property type="term" value="P:snRNA pseudouridine synthesis"/>
    <property type="evidence" value="ECO:0000318"/>
    <property type="project" value="GO_Central"/>
</dbReference>
<dbReference type="GO" id="GO:0007004">
    <property type="term" value="P:telomere maintenance via telomerase"/>
    <property type="evidence" value="ECO:0000250"/>
    <property type="project" value="UniProtKB"/>
</dbReference>
<dbReference type="FunFam" id="3.30.1330.30:FF:000016">
    <property type="entry name" value="H/ACA ribonucleoprotein complex subunit 2"/>
    <property type="match status" value="1"/>
</dbReference>
<dbReference type="Gene3D" id="3.30.1330.30">
    <property type="match status" value="1"/>
</dbReference>
<dbReference type="InterPro" id="IPR050257">
    <property type="entry name" value="eL8/uL1-like"/>
</dbReference>
<dbReference type="InterPro" id="IPR002415">
    <property type="entry name" value="H/ACA_rnp_Nhp2-like"/>
</dbReference>
<dbReference type="InterPro" id="IPR029064">
    <property type="entry name" value="Ribosomal_eL30-like_sf"/>
</dbReference>
<dbReference type="InterPro" id="IPR004038">
    <property type="entry name" value="Ribosomal_eL8/eL30/eS12/Gad45"/>
</dbReference>
<dbReference type="InterPro" id="IPR018492">
    <property type="entry name" value="Ribosomal_eL8/Nhp2"/>
</dbReference>
<dbReference type="PANTHER" id="PTHR23105">
    <property type="entry name" value="RIBOSOMAL PROTEIN L7AE FAMILY MEMBER"/>
    <property type="match status" value="1"/>
</dbReference>
<dbReference type="Pfam" id="PF01248">
    <property type="entry name" value="Ribosomal_L7Ae"/>
    <property type="match status" value="1"/>
</dbReference>
<dbReference type="PRINTS" id="PR00881">
    <property type="entry name" value="L7ARS6FAMILY"/>
</dbReference>
<dbReference type="PRINTS" id="PR00883">
    <property type="entry name" value="NUCLEARHMG"/>
</dbReference>
<dbReference type="SUPFAM" id="SSF55315">
    <property type="entry name" value="L30e-like"/>
    <property type="match status" value="1"/>
</dbReference>
<accession>Q5E950</accession>
<accession>Q3SZ42</accession>
<comment type="function">
    <text evidence="1">Required for ribosome biogenesis and telomere maintenance. Part of the H/ACA small nucleolar ribonucleoprotein (H/ACA snoRNP) complex, which catalyzes pseudouridylation of rRNA. This involves the isomerization of uridine such that the ribose is subsequently attached to C5, instead of the normal N1. Each rRNA can contain up to 100 pseudouridine ('psi') residues, which may serve to stabilize the conformation of rRNAs. May also be required for correct processing or intranuclear trafficking of TERC, the RNA component of the telomerase reverse transcriptase (TERT) holoenzyme (By similarity).</text>
</comment>
<comment type="subunit">
    <text evidence="2">Part of the H/ACA small nucleolar ribonucleoprotein (H/ACA snoRNP) complex, which contains NHP2/NOLA2, GAR1/NOLA1, NOP10/NOLA3, and DKC1/NOLA4, which is presumed to be the catalytic subunit. The complex contains a stable core formed by binding of one or two NOP10-DKC1 heterodimers to NHP2; GAR1 subsequently binds to this core via DKC1. The complex binds a box H/ACA small nucleolar RNA (snoRNA), which may target the specific site of modification within the RNA substrate. During assembly, the complex contains NAF1 instead of GAR1/NOLA1. The complex also interacts with TERC, which contains a 3'-terminal domain related to the box H/ACA snoRNAs. Specific interactions with snoRNAs or TERC are mediated by GAR1 and NHP2. Associates with NOLC1/NOPP140. H/ACA snoRNPs interact with the SMN complex, consisting of SMN1 or SMN2, GEMIN2/SIP1, DDX20/GEMIN3, and GEMIN4. This is mediated by interaction between GAR1 and SMN1 or SMN2. The SMN complex may be required for correct assembly of the H/ACA snoRNP complex. Component of the telomerase holoenzyme complex composed of one molecule of TERT, one molecule of WRAP53/TCAB1, two molecules of H/ACA ribonucleoprotein complex subunits DKC1, NOP10, NHP2 and GAR1, and a telomerase RNA template component (TERC). The telomerase holoenzyme complex is associated with TEP1, SMG6/EST1A and POT1.</text>
</comment>
<comment type="subcellular location">
    <subcellularLocation>
        <location evidence="1">Nucleus</location>
        <location evidence="1">Nucleolus</location>
    </subcellularLocation>
    <subcellularLocation>
        <location evidence="1">Nucleus</location>
        <location evidence="1">Cajal body</location>
    </subcellularLocation>
    <text evidence="1">Also localized to Cajal bodies (coiled bodies).</text>
</comment>
<comment type="similarity">
    <text evidence="3">Belongs to the eukaryotic ribosomal protein eL8 family.</text>
</comment>
<sequence length="153" mass="17197">MTKIKADPDGPEAQADACCGERTYHELLVNLNPIAQPLASRRLTRKLYKCIKKAVKQKQIRRGVKEVQKFINKGEKGIMVLAGDTLPIEVYCHLPVMCEDRNLPYVYIPSKTDLGAAAGSKRPTCVIMVKPHEEYQEAYDECLEEVQALPPPM</sequence>
<feature type="chain" id="PRO_0000136762" description="H/ACA ribonucleoprotein complex subunit 2">
    <location>
        <begin position="1"/>
        <end position="153"/>
    </location>
</feature>
<feature type="cross-link" description="Glycyl lysine isopeptide (Lys-Gly) (interchain with G-Cter in SUMO2)" evidence="2">
    <location>
        <position position="3"/>
    </location>
</feature>
<feature type="cross-link" description="Glycyl lysine isopeptide (Lys-Gly) (interchain with G-Cter in SUMO); alternate" evidence="1">
    <location>
        <position position="5"/>
    </location>
</feature>
<feature type="cross-link" description="Glycyl lysine isopeptide (Lys-Gly) (interchain with G-Cter in SUMO1); alternate" evidence="2">
    <location>
        <position position="5"/>
    </location>
</feature>
<feature type="cross-link" description="Glycyl lysine isopeptide (Lys-Gly) (interchain with G-Cter in SUMO2); alternate" evidence="2">
    <location>
        <position position="5"/>
    </location>
</feature>
<protein>
    <recommendedName>
        <fullName>H/ACA ribonucleoprotein complex subunit 2</fullName>
    </recommendedName>
    <alternativeName>
        <fullName>Nucleolar protein family A member 2</fullName>
    </alternativeName>
    <alternativeName>
        <fullName>snoRNP protein NHP2</fullName>
    </alternativeName>
</protein>
<organism>
    <name type="scientific">Bos taurus</name>
    <name type="common">Bovine</name>
    <dbReference type="NCBI Taxonomy" id="9913"/>
    <lineage>
        <taxon>Eukaryota</taxon>
        <taxon>Metazoa</taxon>
        <taxon>Chordata</taxon>
        <taxon>Craniata</taxon>
        <taxon>Vertebrata</taxon>
        <taxon>Euteleostomi</taxon>
        <taxon>Mammalia</taxon>
        <taxon>Eutheria</taxon>
        <taxon>Laurasiatheria</taxon>
        <taxon>Artiodactyla</taxon>
        <taxon>Ruminantia</taxon>
        <taxon>Pecora</taxon>
        <taxon>Bovidae</taxon>
        <taxon>Bovinae</taxon>
        <taxon>Bos</taxon>
    </lineage>
</organism>